<protein>
    <recommendedName>
        <fullName>Casein kinase II subunit alpha</fullName>
        <shortName>CK II</shortName>
        <ecNumber evidence="2">2.7.11.1</ecNumber>
    </recommendedName>
</protein>
<comment type="function">
    <text evidence="1 2">Catalytic subunit of a constitutively active serine/threonine-protein kinase complex that phosphorylates a large number of substrates containing acidic residues C-terminal to the phosphorylated serine or threonine. Regulates numerous cellular processes, such as cell cycle progression, apoptosis and transcription, as well as viral infection. May act as a regulatory node which integrates and coordinates numerous signals leading to an appropriate cellular response. During mitosis, functions as a component of the p53/TP53-dependent spindle assembly checkpoint (SAC) that maintains cyclin-B-CDK1 activity and G2 arrest in response to spindle damage. Can also negatively regulate apoptosis. Phosphorylates the caspases CASP9 and CASP2 and the apoptotic regulator NOL3. Phosphorylation protects CASP9 from cleavage and activation by CASP8, and inhibits the dimerization of CASP2 and activation of CASP8 (By similarity). Plays an important role in the circadian clock function by phosphorylating BMAL1 (By similarity).</text>
</comment>
<comment type="catalytic activity">
    <reaction evidence="2">
        <text>L-seryl-[protein] + ATP = O-phospho-L-seryl-[protein] + ADP + H(+)</text>
        <dbReference type="Rhea" id="RHEA:17989"/>
        <dbReference type="Rhea" id="RHEA-COMP:9863"/>
        <dbReference type="Rhea" id="RHEA-COMP:11604"/>
        <dbReference type="ChEBI" id="CHEBI:15378"/>
        <dbReference type="ChEBI" id="CHEBI:29999"/>
        <dbReference type="ChEBI" id="CHEBI:30616"/>
        <dbReference type="ChEBI" id="CHEBI:83421"/>
        <dbReference type="ChEBI" id="CHEBI:456216"/>
        <dbReference type="EC" id="2.7.11.1"/>
    </reaction>
    <physiologicalReaction direction="left-to-right" evidence="2">
        <dbReference type="Rhea" id="RHEA:17990"/>
    </physiologicalReaction>
</comment>
<comment type="catalytic activity">
    <reaction evidence="2">
        <text>L-threonyl-[protein] + ATP = O-phospho-L-threonyl-[protein] + ADP + H(+)</text>
        <dbReference type="Rhea" id="RHEA:46608"/>
        <dbReference type="Rhea" id="RHEA-COMP:11060"/>
        <dbReference type="Rhea" id="RHEA-COMP:11605"/>
        <dbReference type="ChEBI" id="CHEBI:15378"/>
        <dbReference type="ChEBI" id="CHEBI:30013"/>
        <dbReference type="ChEBI" id="CHEBI:30616"/>
        <dbReference type="ChEBI" id="CHEBI:61977"/>
        <dbReference type="ChEBI" id="CHEBI:456216"/>
        <dbReference type="EC" id="2.7.11.1"/>
    </reaction>
</comment>
<comment type="subunit">
    <text>Tetramer composed of an alpha chain, an alpha' and two beta chains.</text>
</comment>
<comment type="subcellular location">
    <subcellularLocation>
        <location evidence="2">Nucleus</location>
    </subcellularLocation>
</comment>
<comment type="similarity">
    <text evidence="3">Belongs to the protein kinase superfamily. Ser/Thr protein kinase family. CK2 subfamily.</text>
</comment>
<organism>
    <name type="scientific">Xenopus laevis</name>
    <name type="common">African clawed frog</name>
    <dbReference type="NCBI Taxonomy" id="8355"/>
    <lineage>
        <taxon>Eukaryota</taxon>
        <taxon>Metazoa</taxon>
        <taxon>Chordata</taxon>
        <taxon>Craniata</taxon>
        <taxon>Vertebrata</taxon>
        <taxon>Euteleostomi</taxon>
        <taxon>Amphibia</taxon>
        <taxon>Batrachia</taxon>
        <taxon>Anura</taxon>
        <taxon>Pipoidea</taxon>
        <taxon>Pipidae</taxon>
        <taxon>Xenopodinae</taxon>
        <taxon>Xenopus</taxon>
        <taxon>Xenopus</taxon>
    </lineage>
</organism>
<name>CSK21_XENLA</name>
<gene>
    <name type="primary">csnk2a1</name>
</gene>
<reference key="1">
    <citation type="journal article" date="1992" name="FEBS Lett.">
        <title>The cDNAs coding for the alpha- and beta-subunits of Xenopus laevis casein kinase II.</title>
        <authorList>
            <person name="Jedlicki A."/>
            <person name="Hinrichs M.V."/>
            <person name="Allende C."/>
            <person name="Allende J.E."/>
        </authorList>
    </citation>
    <scope>NUCLEOTIDE SEQUENCE [MRNA]</scope>
    <source>
        <tissue>Oocyte</tissue>
    </source>
</reference>
<reference key="2">
    <citation type="submission" date="2001-05" db="EMBL/GenBank/DDBJ databases">
        <authorList>
            <person name="Allende J.E."/>
        </authorList>
    </citation>
    <scope>SEQUENCE REVISION TO C-TERMINUS</scope>
</reference>
<evidence type="ECO:0000250" key="1">
    <source>
        <dbReference type="UniProtKB" id="P19139"/>
    </source>
</evidence>
<evidence type="ECO:0000250" key="2">
    <source>
        <dbReference type="UniProtKB" id="P68400"/>
    </source>
</evidence>
<evidence type="ECO:0000255" key="3">
    <source>
        <dbReference type="PROSITE-ProRule" id="PRU00159"/>
    </source>
</evidence>
<evidence type="ECO:0000255" key="4">
    <source>
        <dbReference type="PROSITE-ProRule" id="PRU10027"/>
    </source>
</evidence>
<evidence type="ECO:0000256" key="5">
    <source>
        <dbReference type="SAM" id="MobiDB-lite"/>
    </source>
</evidence>
<keyword id="KW-0067">ATP-binding</keyword>
<keyword id="KW-0418">Kinase</keyword>
<keyword id="KW-0547">Nucleotide-binding</keyword>
<keyword id="KW-0539">Nucleus</keyword>
<keyword id="KW-1185">Reference proteome</keyword>
<keyword id="KW-0723">Serine/threonine-protein kinase</keyword>
<keyword id="KW-0808">Transferase</keyword>
<keyword id="KW-0879">Wnt signaling pathway</keyword>
<proteinExistence type="evidence at transcript level"/>
<accession>P28020</accession>
<sequence>MSGPVPSRARVYTDVNTHRPRDYWDYESHVVEWGNQDDYQLVRKLGRGKYSEVFEAINITNNEKVVVKILKPVKKKKIKREIKILENLRGGPNIITLADIVKDPVSRTPALVFEHVNNTDFKQLYQTLTDYDIRFYMYEILKALDYCHSMGIMHRDVKPHNVMIDHEHRKLRLIDWGLAEFYHPGQEYNVRVASRYFKGPELLVDYQMYDYSLDMWSLGCMLASMIFRKEPFFHGHDNYDQLVRIAKVLGTEDLYDYIDKYNIELDPRFNDILGRHSRKRWERFVHSENQHLVSPEALDFLDKLLRYDHQTRLTAREAMDHPYFYPIVKDQSRMGGSNMPSGSSTPVSSASMMSGISTVPTPSALGSLAGSPVISATNTLGTPVAAAAGATQ</sequence>
<dbReference type="EC" id="2.7.11.1" evidence="2"/>
<dbReference type="EMBL" id="X62375">
    <property type="protein sequence ID" value="CAA44238.2"/>
    <property type="molecule type" value="mRNA"/>
</dbReference>
<dbReference type="PIR" id="S20404">
    <property type="entry name" value="S20404"/>
</dbReference>
<dbReference type="SMR" id="P28020"/>
<dbReference type="AGR" id="Xenbase:XB-GENE-959755"/>
<dbReference type="Xenbase" id="XB-GENE-959755">
    <property type="gene designation" value="csnk2a1.S"/>
</dbReference>
<dbReference type="OrthoDB" id="10254671at2759"/>
<dbReference type="BRENDA" id="2.7.11.1">
    <property type="organism ID" value="6725"/>
</dbReference>
<dbReference type="Proteomes" id="UP000186698">
    <property type="component" value="Unplaced"/>
</dbReference>
<dbReference type="GO" id="GO:0005829">
    <property type="term" value="C:cytosol"/>
    <property type="evidence" value="ECO:0000318"/>
    <property type="project" value="GO_Central"/>
</dbReference>
<dbReference type="GO" id="GO:0005634">
    <property type="term" value="C:nucleus"/>
    <property type="evidence" value="ECO:0000318"/>
    <property type="project" value="GO_Central"/>
</dbReference>
<dbReference type="GO" id="GO:0005956">
    <property type="term" value="C:protein kinase CK2 complex"/>
    <property type="evidence" value="ECO:0000318"/>
    <property type="project" value="GO_Central"/>
</dbReference>
<dbReference type="GO" id="GO:0005524">
    <property type="term" value="F:ATP binding"/>
    <property type="evidence" value="ECO:0007669"/>
    <property type="project" value="UniProtKB-KW"/>
</dbReference>
<dbReference type="GO" id="GO:0106310">
    <property type="term" value="F:protein serine kinase activity"/>
    <property type="evidence" value="ECO:0007669"/>
    <property type="project" value="RHEA"/>
</dbReference>
<dbReference type="GO" id="GO:0004674">
    <property type="term" value="F:protein serine/threonine kinase activity"/>
    <property type="evidence" value="ECO:0000250"/>
    <property type="project" value="UniProtKB"/>
</dbReference>
<dbReference type="GO" id="GO:0006302">
    <property type="term" value="P:double-strand break repair"/>
    <property type="evidence" value="ECO:0000250"/>
    <property type="project" value="UniProtKB"/>
</dbReference>
<dbReference type="GO" id="GO:1905337">
    <property type="term" value="P:positive regulation of aggrephagy"/>
    <property type="evidence" value="ECO:0000250"/>
    <property type="project" value="UniProtKB"/>
</dbReference>
<dbReference type="GO" id="GO:0051726">
    <property type="term" value="P:regulation of cell cycle"/>
    <property type="evidence" value="ECO:0000318"/>
    <property type="project" value="GO_Central"/>
</dbReference>
<dbReference type="GO" id="GO:0016055">
    <property type="term" value="P:Wnt signaling pathway"/>
    <property type="evidence" value="ECO:0007669"/>
    <property type="project" value="UniProtKB-KW"/>
</dbReference>
<dbReference type="CDD" id="cd14132">
    <property type="entry name" value="STKc_CK2_alpha"/>
    <property type="match status" value="1"/>
</dbReference>
<dbReference type="FunFam" id="1.10.510.10:FF:000059">
    <property type="entry name" value="Casein kinase II subunit alpha"/>
    <property type="match status" value="1"/>
</dbReference>
<dbReference type="FunFam" id="3.30.200.20:FF:000088">
    <property type="entry name" value="Casein kinase II subunit alpha"/>
    <property type="match status" value="1"/>
</dbReference>
<dbReference type="Gene3D" id="3.30.200.20">
    <property type="entry name" value="Phosphorylase Kinase, domain 1"/>
    <property type="match status" value="1"/>
</dbReference>
<dbReference type="Gene3D" id="1.10.510.10">
    <property type="entry name" value="Transferase(Phosphotransferase) domain 1"/>
    <property type="match status" value="1"/>
</dbReference>
<dbReference type="InterPro" id="IPR045216">
    <property type="entry name" value="CK2_alpha"/>
</dbReference>
<dbReference type="InterPro" id="IPR011009">
    <property type="entry name" value="Kinase-like_dom_sf"/>
</dbReference>
<dbReference type="InterPro" id="IPR000719">
    <property type="entry name" value="Prot_kinase_dom"/>
</dbReference>
<dbReference type="InterPro" id="IPR017441">
    <property type="entry name" value="Protein_kinase_ATP_BS"/>
</dbReference>
<dbReference type="InterPro" id="IPR008271">
    <property type="entry name" value="Ser/Thr_kinase_AS"/>
</dbReference>
<dbReference type="PANTHER" id="PTHR24054">
    <property type="entry name" value="CASEIN KINASE II SUBUNIT ALPHA"/>
    <property type="match status" value="1"/>
</dbReference>
<dbReference type="PANTHER" id="PTHR24054:SF16">
    <property type="entry name" value="CASEIN KINASE II SUBUNIT ALPHA-RELATED"/>
    <property type="match status" value="1"/>
</dbReference>
<dbReference type="Pfam" id="PF00069">
    <property type="entry name" value="Pkinase"/>
    <property type="match status" value="1"/>
</dbReference>
<dbReference type="SMART" id="SM00220">
    <property type="entry name" value="S_TKc"/>
    <property type="match status" value="1"/>
</dbReference>
<dbReference type="SUPFAM" id="SSF56112">
    <property type="entry name" value="Protein kinase-like (PK-like)"/>
    <property type="match status" value="1"/>
</dbReference>
<dbReference type="PROSITE" id="PS00107">
    <property type="entry name" value="PROTEIN_KINASE_ATP"/>
    <property type="match status" value="1"/>
</dbReference>
<dbReference type="PROSITE" id="PS50011">
    <property type="entry name" value="PROTEIN_KINASE_DOM"/>
    <property type="match status" value="1"/>
</dbReference>
<dbReference type="PROSITE" id="PS00108">
    <property type="entry name" value="PROTEIN_KINASE_ST"/>
    <property type="match status" value="1"/>
</dbReference>
<feature type="chain" id="PRO_0000085894" description="Casein kinase II subunit alpha">
    <location>
        <begin position="1"/>
        <end position="392"/>
    </location>
</feature>
<feature type="domain" description="Protein kinase" evidence="3">
    <location>
        <begin position="39"/>
        <end position="324"/>
    </location>
</feature>
<feature type="region of interest" description="Disordered" evidence="5">
    <location>
        <begin position="334"/>
        <end position="355"/>
    </location>
</feature>
<feature type="compositionally biased region" description="Low complexity" evidence="5">
    <location>
        <begin position="337"/>
        <end position="354"/>
    </location>
</feature>
<feature type="active site" description="Proton acceptor" evidence="3 4">
    <location>
        <position position="156"/>
    </location>
</feature>
<feature type="binding site" evidence="3">
    <location>
        <begin position="45"/>
        <end position="53"/>
    </location>
    <ligand>
        <name>ATP</name>
        <dbReference type="ChEBI" id="CHEBI:30616"/>
    </ligand>
</feature>
<feature type="binding site" evidence="3">
    <location>
        <position position="68"/>
    </location>
    <ligand>
        <name>ATP</name>
        <dbReference type="ChEBI" id="CHEBI:30616"/>
    </ligand>
</feature>